<organism>
    <name type="scientific">Xenopus laevis</name>
    <name type="common">African clawed frog</name>
    <dbReference type="NCBI Taxonomy" id="8355"/>
    <lineage>
        <taxon>Eukaryota</taxon>
        <taxon>Metazoa</taxon>
        <taxon>Chordata</taxon>
        <taxon>Craniata</taxon>
        <taxon>Vertebrata</taxon>
        <taxon>Euteleostomi</taxon>
        <taxon>Amphibia</taxon>
        <taxon>Batrachia</taxon>
        <taxon>Anura</taxon>
        <taxon>Pipoidea</taxon>
        <taxon>Pipidae</taxon>
        <taxon>Xenopodinae</taxon>
        <taxon>Xenopus</taxon>
        <taxon>Xenopus</taxon>
    </lineage>
</organism>
<keyword id="KW-0333">Golgi apparatus</keyword>
<keyword id="KW-1185">Reference proteome</keyword>
<protein>
    <recommendedName>
        <fullName>Protein PRRC1-A</fullName>
    </recommendedName>
    <alternativeName>
        <fullName>Proline-rich and coiled-coil-containing protein 1-A</fullName>
    </alternativeName>
</protein>
<dbReference type="EMBL" id="BC146629">
    <property type="protein sequence ID" value="AAI46630.1"/>
    <property type="molecule type" value="mRNA"/>
</dbReference>
<dbReference type="RefSeq" id="NP_001093378.1">
    <property type="nucleotide sequence ID" value="NM_001099908.1"/>
</dbReference>
<dbReference type="SMR" id="A6H8J1"/>
<dbReference type="GeneID" id="100101329"/>
<dbReference type="KEGG" id="xla:100101329"/>
<dbReference type="AGR" id="Xenbase:XB-GENE-5777759"/>
<dbReference type="CTD" id="100101329"/>
<dbReference type="Xenbase" id="XB-GENE-5777759">
    <property type="gene designation" value="prrc1.S"/>
</dbReference>
<dbReference type="OrthoDB" id="4968544at2759"/>
<dbReference type="Proteomes" id="UP000186698">
    <property type="component" value="Chromosome 1S"/>
</dbReference>
<dbReference type="Bgee" id="100101329">
    <property type="expression patterns" value="Expressed in liver and 19 other cell types or tissues"/>
</dbReference>
<dbReference type="GO" id="GO:0005737">
    <property type="term" value="C:cytoplasm"/>
    <property type="evidence" value="ECO:0000250"/>
    <property type="project" value="UniProtKB"/>
</dbReference>
<dbReference type="GO" id="GO:0005794">
    <property type="term" value="C:Golgi apparatus"/>
    <property type="evidence" value="ECO:0000250"/>
    <property type="project" value="UniProtKB"/>
</dbReference>
<dbReference type="GO" id="GO:0034237">
    <property type="term" value="F:protein kinase A regulatory subunit binding"/>
    <property type="evidence" value="ECO:0000318"/>
    <property type="project" value="GO_Central"/>
</dbReference>
<dbReference type="GO" id="GO:0010669">
    <property type="term" value="P:epithelial structure maintenance"/>
    <property type="evidence" value="ECO:0000318"/>
    <property type="project" value="GO_Central"/>
</dbReference>
<dbReference type="FunFam" id="3.90.950.10:FF:000006">
    <property type="entry name" value="PRRC1 isoform 1"/>
    <property type="match status" value="1"/>
</dbReference>
<dbReference type="Gene3D" id="3.90.950.10">
    <property type="match status" value="1"/>
</dbReference>
<dbReference type="InterPro" id="IPR029001">
    <property type="entry name" value="ITPase-like_fam"/>
</dbReference>
<dbReference type="InterPro" id="IPR026533">
    <property type="entry name" value="NTPase/PRRC1"/>
</dbReference>
<dbReference type="InterPro" id="IPR026534">
    <property type="entry name" value="PRRC1"/>
</dbReference>
<dbReference type="PANTHER" id="PTHR23276">
    <property type="entry name" value="PROTEIN PRRC1"/>
    <property type="match status" value="1"/>
</dbReference>
<dbReference type="PANTHER" id="PTHR23276:SF2">
    <property type="entry name" value="PROTEIN PRRC1"/>
    <property type="match status" value="1"/>
</dbReference>
<dbReference type="Pfam" id="PF01931">
    <property type="entry name" value="NTPase_I-T"/>
    <property type="match status" value="1"/>
</dbReference>
<dbReference type="SUPFAM" id="SSF52972">
    <property type="entry name" value="ITPase-like"/>
    <property type="match status" value="1"/>
</dbReference>
<comment type="subcellular location">
    <subcellularLocation>
        <location evidence="1">Golgi apparatus</location>
    </subcellularLocation>
</comment>
<comment type="similarity">
    <text evidence="3">Belongs to the PRRC1 family.</text>
</comment>
<feature type="chain" id="PRO_0000307343" description="Protein PRRC1-A">
    <location>
        <begin position="1"/>
        <end position="442"/>
    </location>
</feature>
<feature type="region of interest" description="Disordered" evidence="2">
    <location>
        <begin position="1"/>
        <end position="27"/>
    </location>
</feature>
<sequence>MMEESGIETTPPSTPPPSTIGTSVPAATTAISTPVPPIFSSPLAAPVFSPLPSFAQPIFSTPLPSSVPPLRTSVPLTYAPPLPVTGVHSPPAHTSVPAAFSSPLPAFSSPPSFPPPPLNTTPGPVLTAPPTGPPVGGFSMSSHYDITKGHAGRAPQTPLMPTYSAAPVTVLPNPVIQAPLAGSGSSITFPEEPEDSRVHTMHVDGSAGGIWGFFKGVAGNPMVKSVLDKTKHSMETVITTLDPGMASYIRTGGEMDIVVTSVKEVKVAAVREAFQEVFGMAVVTGEDGQSNIAPQPVGYAAGLKGAQERIDSLRRSGMIHEKQPAVSVENFIAELLPDKWFDIGCVIIDDPTHGIRLETFTQATPVPLEYVQQAQNLTPQDYNLRWSGLSVTVGEVLERSLAHVCRTDWHVAFTGMSRRQMIYSAAKALAGMYKQRLPPRIL</sequence>
<name>PRRCA_XENLA</name>
<accession>A6H8J1</accession>
<evidence type="ECO:0000250" key="1"/>
<evidence type="ECO:0000256" key="2">
    <source>
        <dbReference type="SAM" id="MobiDB-lite"/>
    </source>
</evidence>
<evidence type="ECO:0000305" key="3"/>
<gene>
    <name type="primary">prrc1-a</name>
</gene>
<reference key="1">
    <citation type="submission" date="2007-06" db="EMBL/GenBank/DDBJ databases">
        <authorList>
            <consortium name="NIH - Xenopus Gene Collection (XGC) project"/>
        </authorList>
    </citation>
    <scope>NUCLEOTIDE SEQUENCE [LARGE SCALE MRNA]</scope>
    <source>
        <tissue>Embryo</tissue>
    </source>
</reference>
<proteinExistence type="evidence at transcript level"/>